<proteinExistence type="evidence at protein level"/>
<name>PEPD_ECOLI</name>
<reference key="1">
    <citation type="journal article" date="1990" name="J. Bacteriol.">
        <title>Peptidase D gene (pepD) of Escherichia coli K-12: nucleotide sequence, transcript mapping, and comparison with other peptidase genes.</title>
        <authorList>
            <person name="Henrich B."/>
            <person name="Monnerjahn U."/>
            <person name="Plapp R."/>
        </authorList>
    </citation>
    <scope>NUCLEOTIDE SEQUENCE [GENOMIC DNA]</scope>
    <scope>PARTIAL PROTEIN SEQUENCE</scope>
    <source>
        <strain>K12</strain>
    </source>
</reference>
<reference key="2">
    <citation type="submission" date="1996-02" db="EMBL/GenBank/DDBJ databases">
        <title>Systematic sequencing of the Escherichia coli genome: analysis of the 4.0 - 6.0 min (189,987 - 281,416bp) region.</title>
        <authorList>
            <person name="Takemoto K."/>
            <person name="Mori H."/>
            <person name="Murayama N."/>
            <person name="Kataoka K."/>
            <person name="Yano M."/>
            <person name="Itoh T."/>
            <person name="Yamamoto Y."/>
            <person name="Inokuchi H."/>
            <person name="Miki T."/>
            <person name="Hatada E."/>
            <person name="Fukuda R."/>
            <person name="Ichihara S."/>
            <person name="Mizuno T."/>
            <person name="Makino K."/>
            <person name="Nakata A."/>
            <person name="Yura T."/>
            <person name="Sampei G."/>
            <person name="Mizobuchi K."/>
        </authorList>
    </citation>
    <scope>NUCLEOTIDE SEQUENCE [LARGE SCALE GENOMIC DNA]</scope>
    <source>
        <strain>K12 / W3110 / ATCC 27325 / DSM 5911</strain>
    </source>
</reference>
<reference key="3">
    <citation type="submission" date="1997-01" db="EMBL/GenBank/DDBJ databases">
        <title>Sequence of minutes 4-25 of Escherichia coli.</title>
        <authorList>
            <person name="Chung E."/>
            <person name="Allen E."/>
            <person name="Araujo R."/>
            <person name="Aparicio A.M."/>
            <person name="Davis K."/>
            <person name="Duncan M."/>
            <person name="Federspiel N."/>
            <person name="Hyman R."/>
            <person name="Kalman S."/>
            <person name="Komp C."/>
            <person name="Kurdi O."/>
            <person name="Lew H."/>
            <person name="Lin D."/>
            <person name="Namath A."/>
            <person name="Oefner P."/>
            <person name="Roberts D."/>
            <person name="Schramm S."/>
            <person name="Davis R.W."/>
        </authorList>
    </citation>
    <scope>NUCLEOTIDE SEQUENCE [LARGE SCALE GENOMIC DNA]</scope>
    <source>
        <strain>K12 / MG1655 / ATCC 47076</strain>
    </source>
</reference>
<reference key="4">
    <citation type="journal article" date="1997" name="Science">
        <title>The complete genome sequence of Escherichia coli K-12.</title>
        <authorList>
            <person name="Blattner F.R."/>
            <person name="Plunkett G. III"/>
            <person name="Bloch C.A."/>
            <person name="Perna N.T."/>
            <person name="Burland V."/>
            <person name="Riley M."/>
            <person name="Collado-Vides J."/>
            <person name="Glasner J.D."/>
            <person name="Rode C.K."/>
            <person name="Mayhew G.F."/>
            <person name="Gregor J."/>
            <person name="Davis N.W."/>
            <person name="Kirkpatrick H.A."/>
            <person name="Goeden M.A."/>
            <person name="Rose D.J."/>
            <person name="Mau B."/>
            <person name="Shao Y."/>
        </authorList>
    </citation>
    <scope>NUCLEOTIDE SEQUENCE [LARGE SCALE GENOMIC DNA]</scope>
    <source>
        <strain>K12 / MG1655 / ATCC 47076</strain>
    </source>
</reference>
<reference key="5">
    <citation type="journal article" date="2006" name="Mol. Syst. Biol.">
        <title>Highly accurate genome sequences of Escherichia coli K-12 strains MG1655 and W3110.</title>
        <authorList>
            <person name="Hayashi K."/>
            <person name="Morooka N."/>
            <person name="Yamamoto Y."/>
            <person name="Fujita K."/>
            <person name="Isono K."/>
            <person name="Choi S."/>
            <person name="Ohtsubo E."/>
            <person name="Baba T."/>
            <person name="Wanner B.L."/>
            <person name="Mori H."/>
            <person name="Horiuchi T."/>
        </authorList>
    </citation>
    <scope>NUCLEOTIDE SEQUENCE [LARGE SCALE GENOMIC DNA]</scope>
    <source>
        <strain>K12 / W3110 / ATCC 27325 / DSM 5911</strain>
    </source>
</reference>
<reference key="6">
    <citation type="journal article" date="1989" name="Mol. Gen. Genet.">
        <title>Accurate mapping of the Escherichia coli pepD gene by sequence analysis of its 5' flanking region.</title>
        <authorList>
            <person name="Henrich B."/>
            <person name="Schroeder U."/>
            <person name="Frank R.W."/>
            <person name="Plapp R."/>
        </authorList>
    </citation>
    <scope>NUCLEOTIDE SEQUENCE [GENOMIC DNA] OF 1-56</scope>
    <scope>PROTEIN SEQUENCE OF 2-13</scope>
    <source>
        <strain>K12</strain>
    </source>
</reference>
<reference key="7">
    <citation type="journal article" date="1978" name="J. Bacteriol.">
        <title>Peptidase-deficient mutants of Escherichia coli.</title>
        <authorList>
            <person name="Miller C.G."/>
            <person name="Schwartz G."/>
        </authorList>
    </citation>
    <scope>FUNCTION</scope>
    <scope>CATALYTIC ACTIVITY</scope>
</reference>
<reference key="8">
    <citation type="journal article" date="1994" name="FEMS Microbiol. Lett.">
        <title>Peptidase D of Escherichia coli K-12, a metallopeptidase of low substrate specificity.</title>
        <authorList>
            <person name="Schroeder U."/>
            <person name="Henrich B."/>
            <person name="Fink J."/>
            <person name="Plapp R."/>
        </authorList>
    </citation>
    <scope>FUNCTION</scope>
    <scope>CATALYTIC ACTIVITY</scope>
    <scope>COFACTOR</scope>
    <scope>SUBSTRATE SPECIFICITY</scope>
    <scope>ACTIVITY REGULATION</scope>
    <scope>BIOPHYSICOCHEMICAL PROPERTIES</scope>
</reference>
<reference key="9">
    <citation type="journal article" date="2001" name="J. Bacteriol.">
        <title>Aminopeptidases A, B, and N and dipeptidase D are the four cysteinylglycinases of Escherichia coli K-12.</title>
        <authorList>
            <person name="Suzuki H."/>
            <person name="Kamatani S."/>
            <person name="Kim E.-S."/>
            <person name="Kumagai H."/>
        </authorList>
    </citation>
    <scope>FUNCTION</scope>
</reference>
<reference key="10">
    <citation type="journal article" date="2009" name="Mol. Cell. Proteomics">
        <title>Lysine acetylation is a highly abundant and evolutionarily conserved modification in Escherichia coli.</title>
        <authorList>
            <person name="Zhang J."/>
            <person name="Sprung R."/>
            <person name="Pei J."/>
            <person name="Tan X."/>
            <person name="Kim S."/>
            <person name="Zhu H."/>
            <person name="Liu C.F."/>
            <person name="Grishin N.V."/>
            <person name="Zhao Y."/>
        </authorList>
    </citation>
    <scope>ACETYLATION [LARGE SCALE ANALYSIS] AT LYS-296</scope>
    <scope>IDENTIFICATION BY MASS SPECTROMETRY</scope>
    <source>
        <strain>K12 / JW1106</strain>
        <strain>K12 / MG1655 / ATCC 47076</strain>
    </source>
</reference>
<reference key="11">
    <citation type="journal article" date="2010" name="FEMS Microbiol. Lett.">
        <title>Effect of multidrug-efflux transporter genes on dipeptide resistance and overproduction in Escherichia coli.</title>
        <authorList>
            <person name="Hayashi M."/>
            <person name="Tabata K."/>
            <person name="Yagasaki M."/>
            <person name="Yonetani Y."/>
        </authorList>
    </citation>
    <scope>FUNCTION IN PEPTIDE DEGRADATION</scope>
    <scope>DISRUPTION PHENOTYPE</scope>
    <source>
        <strain>K12 / JM101 / ATCC 33876 / DSM 3948 / NCIMB 11926</strain>
    </source>
</reference>
<organism>
    <name type="scientific">Escherichia coli (strain K12)</name>
    <dbReference type="NCBI Taxonomy" id="83333"/>
    <lineage>
        <taxon>Bacteria</taxon>
        <taxon>Pseudomonadati</taxon>
        <taxon>Pseudomonadota</taxon>
        <taxon>Gammaproteobacteria</taxon>
        <taxon>Enterobacterales</taxon>
        <taxon>Enterobacteriaceae</taxon>
        <taxon>Escherichia</taxon>
    </lineage>
</organism>
<comment type="function">
    <text evidence="2 4 6 7">Dipeptidase with broad substrate specificity. Requires dipeptide substrates with an unblocked N-terminus and the amino group in the alpha or beta position. Non-protein amino acids and proline are not accepted in the C-terminal position, whereas some dipeptide amides and formyl amino acids are hydrolyzed. Also shows cysteinylglycinase activity, which is sufficient for E.coli to utilize cysteinylglycine as a cysteine source.</text>
</comment>
<comment type="catalytic activity">
    <reaction evidence="6 7">
        <text>Hydrolysis of dipeptides, preferentially hydrophobic dipeptides including prolyl amino acids.</text>
        <dbReference type="EC" id="3.4.13.18"/>
    </reaction>
</comment>
<comment type="cofactor">
    <cofactor evidence="7">
        <name>Zn(2+)</name>
        <dbReference type="ChEBI" id="CHEBI:29105"/>
    </cofactor>
    <cofactor evidence="7">
        <name>Co(2+)</name>
        <dbReference type="ChEBI" id="CHEBI:48828"/>
    </cofactor>
    <text evidence="7">Binds 2 Zn(2+) ions per subunit. Can also use Co(2+).</text>
</comment>
<comment type="activity regulation">
    <text evidence="7">Inhibited by metal chelators.</text>
</comment>
<comment type="biophysicochemical properties">
    <phDependence>
        <text evidence="7">Optimum pH is 9.</text>
    </phDependence>
    <temperatureDependence>
        <text evidence="7">Optimum temperature is 37 degrees Celsius.</text>
    </temperatureDependence>
</comment>
<comment type="interaction">
    <interactant intactId="EBI-542419">
        <id>P15288</id>
    </interactant>
    <interactant intactId="EBI-544491">
        <id>P60560</id>
        <label>guaC</label>
    </interactant>
    <organismsDiffer>false</organismsDiffer>
    <experiments>3</experiments>
</comment>
<comment type="interaction">
    <interactant intactId="EBI-542419">
        <id>P15288</id>
    </interactant>
    <interactant intactId="EBI-554801">
        <id>P15034</id>
        <label>pepP</label>
    </interactant>
    <organismsDiffer>false</organismsDiffer>
    <experiments>4</experiments>
</comment>
<comment type="disruption phenotype">
    <text evidence="4">A quadruple peptidase disruption (pepA, pepB, pepD and pepN) does not grow in M9 minimal medium, grows better when supplemented with casamino acids (PubMed:20067529).</text>
</comment>
<comment type="similarity">
    <text evidence="8">Belongs to the peptidase M20C family.</text>
</comment>
<dbReference type="EC" id="3.4.13.18"/>
<dbReference type="EMBL" id="M34034">
    <property type="protein sequence ID" value="AAA16111.1"/>
    <property type="molecule type" value="Unassigned_DNA"/>
</dbReference>
<dbReference type="EMBL" id="U70214">
    <property type="protein sequence ID" value="AAB08657.1"/>
    <property type="molecule type" value="Genomic_DNA"/>
</dbReference>
<dbReference type="EMBL" id="U00096">
    <property type="protein sequence ID" value="AAC73341.1"/>
    <property type="molecule type" value="Genomic_DNA"/>
</dbReference>
<dbReference type="EMBL" id="AP009048">
    <property type="protein sequence ID" value="BAA77906.1"/>
    <property type="molecule type" value="Genomic_DNA"/>
</dbReference>
<dbReference type="EMBL" id="X14790">
    <property type="protein sequence ID" value="CAA32892.1"/>
    <property type="molecule type" value="Genomic_DNA"/>
</dbReference>
<dbReference type="PIR" id="JU0300">
    <property type="entry name" value="JU0300"/>
</dbReference>
<dbReference type="RefSeq" id="NP_414772.1">
    <property type="nucleotide sequence ID" value="NC_000913.3"/>
</dbReference>
<dbReference type="RefSeq" id="WP_001292994.1">
    <property type="nucleotide sequence ID" value="NZ_SSZK01000050.1"/>
</dbReference>
<dbReference type="SMR" id="P15288"/>
<dbReference type="BioGRID" id="4259765">
    <property type="interactions" value="107"/>
</dbReference>
<dbReference type="BioGRID" id="849407">
    <property type="interactions" value="2"/>
</dbReference>
<dbReference type="DIP" id="DIP-10456N"/>
<dbReference type="FunCoup" id="P15288">
    <property type="interactions" value="353"/>
</dbReference>
<dbReference type="IntAct" id="P15288">
    <property type="interactions" value="69"/>
</dbReference>
<dbReference type="STRING" id="511145.b0237"/>
<dbReference type="MEROPS" id="M20.007"/>
<dbReference type="iPTMnet" id="P15288"/>
<dbReference type="jPOST" id="P15288"/>
<dbReference type="PaxDb" id="511145-b0237"/>
<dbReference type="EnsemblBacteria" id="AAC73341">
    <property type="protein sequence ID" value="AAC73341"/>
    <property type="gene ID" value="b0237"/>
</dbReference>
<dbReference type="GeneID" id="945013"/>
<dbReference type="KEGG" id="ecj:JW0227"/>
<dbReference type="KEGG" id="eco:b0237"/>
<dbReference type="KEGG" id="ecoc:C3026_01125"/>
<dbReference type="KEGG" id="ecoc:C3026_23860"/>
<dbReference type="PATRIC" id="fig|1411691.4.peg.2046"/>
<dbReference type="EchoBASE" id="EB0689"/>
<dbReference type="eggNOG" id="COG2195">
    <property type="taxonomic scope" value="Bacteria"/>
</dbReference>
<dbReference type="HOGENOM" id="CLU_028526_0_0_6"/>
<dbReference type="InParanoid" id="P15288"/>
<dbReference type="OMA" id="KGGYPGW"/>
<dbReference type="OrthoDB" id="9773892at2"/>
<dbReference type="PhylomeDB" id="P15288"/>
<dbReference type="BioCyc" id="EcoCyc:EG10695-MONOMER"/>
<dbReference type="BioCyc" id="MetaCyc:EG10695-MONOMER"/>
<dbReference type="PRO" id="PR:P15288"/>
<dbReference type="Proteomes" id="UP000000625">
    <property type="component" value="Chromosome"/>
</dbReference>
<dbReference type="GO" id="GO:0005829">
    <property type="term" value="C:cytosol"/>
    <property type="evidence" value="ECO:0000314"/>
    <property type="project" value="EcoCyc"/>
</dbReference>
<dbReference type="GO" id="GO:0016805">
    <property type="term" value="F:dipeptidase activity"/>
    <property type="evidence" value="ECO:0000315"/>
    <property type="project" value="EcoCyc"/>
</dbReference>
<dbReference type="GO" id="GO:0070573">
    <property type="term" value="F:metallodipeptidase activity"/>
    <property type="evidence" value="ECO:0000314"/>
    <property type="project" value="EcoCyc"/>
</dbReference>
<dbReference type="GO" id="GO:0042803">
    <property type="term" value="F:protein homodimerization activity"/>
    <property type="evidence" value="ECO:0000314"/>
    <property type="project" value="EcoCyc"/>
</dbReference>
<dbReference type="GO" id="GO:0008270">
    <property type="term" value="F:zinc ion binding"/>
    <property type="evidence" value="ECO:0000314"/>
    <property type="project" value="EcoCyc"/>
</dbReference>
<dbReference type="GO" id="GO:0043171">
    <property type="term" value="P:peptide catabolic process"/>
    <property type="evidence" value="ECO:0000316"/>
    <property type="project" value="EcoliWiki"/>
</dbReference>
<dbReference type="GO" id="GO:0006508">
    <property type="term" value="P:proteolysis"/>
    <property type="evidence" value="ECO:0007669"/>
    <property type="project" value="UniProtKB-KW"/>
</dbReference>
<dbReference type="CDD" id="cd03890">
    <property type="entry name" value="M20_pepD"/>
    <property type="match status" value="1"/>
</dbReference>
<dbReference type="FunFam" id="3.40.630.10:FF:000015">
    <property type="entry name" value="Aminoacyl-histidine dipeptidase PepD"/>
    <property type="match status" value="1"/>
</dbReference>
<dbReference type="FunFam" id="3.40.630.10:FF:000018">
    <property type="entry name" value="Aminoacyl-histidine dipeptidase PepD"/>
    <property type="match status" value="1"/>
</dbReference>
<dbReference type="Gene3D" id="3.40.630.10">
    <property type="entry name" value="Zn peptidases"/>
    <property type="match status" value="2"/>
</dbReference>
<dbReference type="InterPro" id="IPR002933">
    <property type="entry name" value="Peptidase_M20"/>
</dbReference>
<dbReference type="InterPro" id="IPR011650">
    <property type="entry name" value="Peptidase_M20_dimer"/>
</dbReference>
<dbReference type="InterPro" id="IPR001160">
    <property type="entry name" value="Peptidase_M20C"/>
</dbReference>
<dbReference type="NCBIfam" id="TIGR01893">
    <property type="entry name" value="aa-his-dipept"/>
    <property type="match status" value="1"/>
</dbReference>
<dbReference type="NCBIfam" id="NF011600">
    <property type="entry name" value="PRK15026.1"/>
    <property type="match status" value="1"/>
</dbReference>
<dbReference type="PANTHER" id="PTHR43501">
    <property type="entry name" value="CYTOSOL NON-SPECIFIC DIPEPTIDASE"/>
    <property type="match status" value="1"/>
</dbReference>
<dbReference type="PANTHER" id="PTHR43501:SF1">
    <property type="entry name" value="CYTOSOL NON-SPECIFIC DIPEPTIDASE"/>
    <property type="match status" value="1"/>
</dbReference>
<dbReference type="Pfam" id="PF07687">
    <property type="entry name" value="M20_dimer"/>
    <property type="match status" value="1"/>
</dbReference>
<dbReference type="Pfam" id="PF01546">
    <property type="entry name" value="Peptidase_M20"/>
    <property type="match status" value="1"/>
</dbReference>
<dbReference type="PIRSF" id="PIRSF016599">
    <property type="entry name" value="Xaa-His_dipept"/>
    <property type="match status" value="1"/>
</dbReference>
<dbReference type="PRINTS" id="PR00934">
    <property type="entry name" value="XHISDIPTASE"/>
</dbReference>
<dbReference type="SUPFAM" id="SSF53187">
    <property type="entry name" value="Zn-dependent exopeptidases"/>
    <property type="match status" value="1"/>
</dbReference>
<protein>
    <recommendedName>
        <fullName>Cytosol non-specific dipeptidase</fullName>
        <ecNumber>3.4.13.18</ecNumber>
    </recommendedName>
    <alternativeName>
        <fullName>Aminoacyl-histidine dipeptidase</fullName>
    </alternativeName>
    <alternativeName>
        <fullName>Beta-alanyl-histidine dipeptidase</fullName>
    </alternativeName>
    <alternativeName>
        <fullName>Carnosinase</fullName>
    </alternativeName>
    <alternativeName>
        <fullName>Cysteinylglycinase</fullName>
    </alternativeName>
    <alternativeName>
        <fullName>Peptidase D</fullName>
    </alternativeName>
    <alternativeName>
        <fullName>Xaa-His dipeptidase</fullName>
        <shortName>X-His dipeptidase</shortName>
    </alternativeName>
</protein>
<evidence type="ECO:0000250" key="1"/>
<evidence type="ECO:0000269" key="2">
    <source>
    </source>
</evidence>
<evidence type="ECO:0000269" key="3">
    <source>
    </source>
</evidence>
<evidence type="ECO:0000269" key="4">
    <source>
    </source>
</evidence>
<evidence type="ECO:0000269" key="5">
    <source>
    </source>
</evidence>
<evidence type="ECO:0000269" key="6">
    <source>
    </source>
</evidence>
<evidence type="ECO:0000269" key="7">
    <source>
    </source>
</evidence>
<evidence type="ECO:0000305" key="8"/>
<feature type="initiator methionine" description="Removed" evidence="5">
    <location>
        <position position="1"/>
    </location>
</feature>
<feature type="chain" id="PRO_0000185354" description="Cytosol non-specific dipeptidase">
    <location>
        <begin position="2"/>
        <end position="485"/>
    </location>
</feature>
<feature type="active site" evidence="1">
    <location>
        <position position="78"/>
    </location>
</feature>
<feature type="active site" description="Proton acceptor" evidence="1">
    <location>
        <position position="145"/>
    </location>
</feature>
<feature type="binding site" evidence="1">
    <location>
        <position position="76"/>
    </location>
    <ligand>
        <name>Zn(2+)</name>
        <dbReference type="ChEBI" id="CHEBI:29105"/>
        <label>2</label>
    </ligand>
</feature>
<feature type="binding site" evidence="1">
    <location>
        <position position="115"/>
    </location>
    <ligand>
        <name>Zn(2+)</name>
        <dbReference type="ChEBI" id="CHEBI:29105"/>
        <label>1</label>
    </ligand>
</feature>
<feature type="binding site" evidence="1">
    <location>
        <position position="115"/>
    </location>
    <ligand>
        <name>Zn(2+)</name>
        <dbReference type="ChEBI" id="CHEBI:29105"/>
        <label>2</label>
    </ligand>
</feature>
<feature type="binding site" evidence="1">
    <location>
        <position position="146"/>
    </location>
    <ligand>
        <name>Zn(2+)</name>
        <dbReference type="ChEBI" id="CHEBI:29105"/>
        <label>1</label>
    </ligand>
</feature>
<feature type="binding site" evidence="1">
    <location>
        <position position="169"/>
    </location>
    <ligand>
        <name>Zn(2+)</name>
        <dbReference type="ChEBI" id="CHEBI:29105"/>
        <label>2</label>
    </ligand>
</feature>
<feature type="binding site" evidence="1">
    <location>
        <position position="457"/>
    </location>
    <ligand>
        <name>Zn(2+)</name>
        <dbReference type="ChEBI" id="CHEBI:29105"/>
        <label>1</label>
    </ligand>
</feature>
<feature type="modified residue" description="N6-acetyllysine" evidence="3">
    <location>
        <position position="296"/>
    </location>
</feature>
<keyword id="KW-0007">Acetylation</keyword>
<keyword id="KW-0170">Cobalt</keyword>
<keyword id="KW-0224">Dipeptidase</keyword>
<keyword id="KW-0903">Direct protein sequencing</keyword>
<keyword id="KW-0378">Hydrolase</keyword>
<keyword id="KW-0479">Metal-binding</keyword>
<keyword id="KW-0482">Metalloprotease</keyword>
<keyword id="KW-0645">Protease</keyword>
<keyword id="KW-1185">Reference proteome</keyword>
<keyword id="KW-0862">Zinc</keyword>
<sequence>MSELSQLSPQPLWDIFAKICSIPHPSYHEEQLAEYIVGWAKEKGFHVERDQVGNILIRKPATAGMENRKPVVLQAHLDMVPQKNNDTVHDFTKDPIQPYIDGEWVKARGTTLGADNGIGMASALAVLADENVVHGPLEVLLTMTEEAGMDGAFGLQGNWLQADILINTDSEEEGEIYMGCAGGIDFTSNLHLDREAVPAGFETFKLTLKGLKGGHSGGEIHVGLGNANKLLVRFLAGHAEELDLRLIDFNGGTLRNAIPREAFATIAVAADKVDVLKSLVNTYQEILKNELAEKEKNLALLLDSVANDKAALIAKSRDTFIRLLNATPNGVIRNSDVAKGVVETSLNVGVVTMTDNNVEIHCLIRSLIDSGKDYVVSMLDSLGKLAGAKTEAKGAYPGWQPDANSPVMHLVRETYQRLFNKTPNIQIIHAGLECGLFKKPYPEMDMVSIGPTITGPHSPDEQVHIESVGHYWTLLTELLKEIPAK</sequence>
<gene>
    <name type="primary">pepD</name>
    <name type="synonym">pepH</name>
    <name type="ordered locus">b0237</name>
    <name type="ordered locus">JW0227</name>
</gene>
<accession>P15288</accession>